<reference key="1">
    <citation type="submission" date="2005-08" db="EMBL/GenBank/DDBJ databases">
        <title>Complete sequence of Synechococcus sp. CC9902.</title>
        <authorList>
            <person name="Copeland A."/>
            <person name="Lucas S."/>
            <person name="Lapidus A."/>
            <person name="Barry K."/>
            <person name="Detter J.C."/>
            <person name="Glavina T."/>
            <person name="Hammon N."/>
            <person name="Israni S."/>
            <person name="Pitluck S."/>
            <person name="Martinez M."/>
            <person name="Schmutz J."/>
            <person name="Larimer F."/>
            <person name="Land M."/>
            <person name="Kyrpides N."/>
            <person name="Ivanova N."/>
            <person name="Richardson P."/>
        </authorList>
    </citation>
    <scope>NUCLEOTIDE SEQUENCE [LARGE SCALE GENOMIC DNA]</scope>
    <source>
        <strain>CC9902</strain>
    </source>
</reference>
<comment type="function">
    <text evidence="1">Binds to the 23S rRNA.</text>
</comment>
<comment type="subunit">
    <text evidence="1">Part of the 50S ribosomal subunit.</text>
</comment>
<comment type="similarity">
    <text evidence="1">Belongs to the universal ribosomal protein uL15 family.</text>
</comment>
<gene>
    <name evidence="1" type="primary">rplO</name>
    <name type="ordered locus">Syncc9902_1972</name>
</gene>
<name>RL15_SYNS9</name>
<evidence type="ECO:0000255" key="1">
    <source>
        <dbReference type="HAMAP-Rule" id="MF_01341"/>
    </source>
</evidence>
<evidence type="ECO:0000256" key="2">
    <source>
        <dbReference type="SAM" id="MobiDB-lite"/>
    </source>
</evidence>
<evidence type="ECO:0000305" key="3"/>
<sequence length="151" mass="16226">MTLRLDSLKANKGARRRKLRKGRGIAAGQGASCGFGMRGQKSRSGRPTRPGFEGGQMPLYRRVPKLKHFPLVNPKHFTVLNVSALKDLKDGATVNLDSLVKDGIVTSPKHPLKMLGNGELTVKNLTVQASAFTTSARTKIEAAGGTCETLD</sequence>
<accession>Q3AW76</accession>
<feature type="chain" id="PRO_0000251574" description="Large ribosomal subunit protein uL15">
    <location>
        <begin position="1"/>
        <end position="151"/>
    </location>
</feature>
<feature type="region of interest" description="Disordered" evidence="2">
    <location>
        <begin position="1"/>
        <end position="57"/>
    </location>
</feature>
<feature type="compositionally biased region" description="Basic residues" evidence="2">
    <location>
        <begin position="12"/>
        <end position="23"/>
    </location>
</feature>
<feature type="compositionally biased region" description="Gly residues" evidence="2">
    <location>
        <begin position="25"/>
        <end position="37"/>
    </location>
</feature>
<proteinExistence type="inferred from homology"/>
<protein>
    <recommendedName>
        <fullName evidence="1">Large ribosomal subunit protein uL15</fullName>
    </recommendedName>
    <alternativeName>
        <fullName evidence="3">50S ribosomal protein L15</fullName>
    </alternativeName>
</protein>
<keyword id="KW-1185">Reference proteome</keyword>
<keyword id="KW-0687">Ribonucleoprotein</keyword>
<keyword id="KW-0689">Ribosomal protein</keyword>
<keyword id="KW-0694">RNA-binding</keyword>
<keyword id="KW-0699">rRNA-binding</keyword>
<organism>
    <name type="scientific">Synechococcus sp. (strain CC9902)</name>
    <dbReference type="NCBI Taxonomy" id="316279"/>
    <lineage>
        <taxon>Bacteria</taxon>
        <taxon>Bacillati</taxon>
        <taxon>Cyanobacteriota</taxon>
        <taxon>Cyanophyceae</taxon>
        <taxon>Synechococcales</taxon>
        <taxon>Synechococcaceae</taxon>
        <taxon>Synechococcus</taxon>
    </lineage>
</organism>
<dbReference type="EMBL" id="CP000097">
    <property type="protein sequence ID" value="ABB26930.1"/>
    <property type="molecule type" value="Genomic_DNA"/>
</dbReference>
<dbReference type="RefSeq" id="WP_011360726.1">
    <property type="nucleotide sequence ID" value="NC_007513.1"/>
</dbReference>
<dbReference type="SMR" id="Q3AW76"/>
<dbReference type="STRING" id="316279.Syncc9902_1972"/>
<dbReference type="KEGG" id="sye:Syncc9902_1972"/>
<dbReference type="eggNOG" id="COG0200">
    <property type="taxonomic scope" value="Bacteria"/>
</dbReference>
<dbReference type="HOGENOM" id="CLU_055188_4_1_3"/>
<dbReference type="OrthoDB" id="9810293at2"/>
<dbReference type="Proteomes" id="UP000002712">
    <property type="component" value="Chromosome"/>
</dbReference>
<dbReference type="GO" id="GO:0022625">
    <property type="term" value="C:cytosolic large ribosomal subunit"/>
    <property type="evidence" value="ECO:0007669"/>
    <property type="project" value="TreeGrafter"/>
</dbReference>
<dbReference type="GO" id="GO:0019843">
    <property type="term" value="F:rRNA binding"/>
    <property type="evidence" value="ECO:0007669"/>
    <property type="project" value="UniProtKB-UniRule"/>
</dbReference>
<dbReference type="GO" id="GO:0003735">
    <property type="term" value="F:structural constituent of ribosome"/>
    <property type="evidence" value="ECO:0007669"/>
    <property type="project" value="InterPro"/>
</dbReference>
<dbReference type="GO" id="GO:0006412">
    <property type="term" value="P:translation"/>
    <property type="evidence" value="ECO:0007669"/>
    <property type="project" value="UniProtKB-UniRule"/>
</dbReference>
<dbReference type="Gene3D" id="3.100.10.10">
    <property type="match status" value="1"/>
</dbReference>
<dbReference type="HAMAP" id="MF_01341">
    <property type="entry name" value="Ribosomal_uL15"/>
    <property type="match status" value="1"/>
</dbReference>
<dbReference type="InterPro" id="IPR030878">
    <property type="entry name" value="Ribosomal_uL15"/>
</dbReference>
<dbReference type="InterPro" id="IPR021131">
    <property type="entry name" value="Ribosomal_uL15/eL18"/>
</dbReference>
<dbReference type="InterPro" id="IPR036227">
    <property type="entry name" value="Ribosomal_uL15/eL18_sf"/>
</dbReference>
<dbReference type="InterPro" id="IPR005749">
    <property type="entry name" value="Ribosomal_uL15_bac-type"/>
</dbReference>
<dbReference type="InterPro" id="IPR001196">
    <property type="entry name" value="Ribosomal_uL15_CS"/>
</dbReference>
<dbReference type="NCBIfam" id="TIGR01071">
    <property type="entry name" value="rplO_bact"/>
    <property type="match status" value="1"/>
</dbReference>
<dbReference type="PANTHER" id="PTHR12934">
    <property type="entry name" value="50S RIBOSOMAL PROTEIN L15"/>
    <property type="match status" value="1"/>
</dbReference>
<dbReference type="PANTHER" id="PTHR12934:SF11">
    <property type="entry name" value="LARGE RIBOSOMAL SUBUNIT PROTEIN UL15M"/>
    <property type="match status" value="1"/>
</dbReference>
<dbReference type="Pfam" id="PF00828">
    <property type="entry name" value="Ribosomal_L27A"/>
    <property type="match status" value="1"/>
</dbReference>
<dbReference type="SUPFAM" id="SSF52080">
    <property type="entry name" value="Ribosomal proteins L15p and L18e"/>
    <property type="match status" value="1"/>
</dbReference>
<dbReference type="PROSITE" id="PS00475">
    <property type="entry name" value="RIBOSOMAL_L15"/>
    <property type="match status" value="1"/>
</dbReference>